<comment type="function">
    <text evidence="4 9">This is a copper-containing oxidase that functions in the formation of pigments such as melanins and other polyphenolic compounds. Catalyzes the rate-limiting conversions of tyrosine to DOPA, DOPA to DOPA-quinone and possibly 5,6 dihydroxyindole to indole-5'6 quinone. Binds to the surface of hemocytes and is involved in hemocyte melanization.</text>
</comment>
<comment type="catalytic activity">
    <reaction>
        <text>2 L-dopa + O2 = 2 L-dopaquinone + 2 H2O</text>
        <dbReference type="Rhea" id="RHEA:34287"/>
        <dbReference type="ChEBI" id="CHEBI:15377"/>
        <dbReference type="ChEBI" id="CHEBI:15379"/>
        <dbReference type="ChEBI" id="CHEBI:57504"/>
        <dbReference type="ChEBI" id="CHEBI:57924"/>
        <dbReference type="EC" id="1.14.18.1"/>
    </reaction>
</comment>
<comment type="catalytic activity">
    <reaction>
        <text>L-tyrosine + O2 = L-dopaquinone + H2O</text>
        <dbReference type="Rhea" id="RHEA:18117"/>
        <dbReference type="ChEBI" id="CHEBI:15377"/>
        <dbReference type="ChEBI" id="CHEBI:15379"/>
        <dbReference type="ChEBI" id="CHEBI:57924"/>
        <dbReference type="ChEBI" id="CHEBI:58315"/>
        <dbReference type="EC" id="1.14.18.1"/>
    </reaction>
</comment>
<comment type="cofactor">
    <cofactor evidence="5">
        <name>Cu(2+)</name>
        <dbReference type="ChEBI" id="CHEBI:29036"/>
    </cofactor>
    <text evidence="5">Binds 2 copper ions per subunit.</text>
</comment>
<comment type="activity regulation">
    <text evidence="3">Activated by immulectin and lipopolysaccharide.</text>
</comment>
<comment type="subunit">
    <text evidence="5 7 8">Heterodimer. Forms a complex with an interleukin 1-like protein as a consequence of a host defense response.</text>
</comment>
<comment type="subcellular location">
    <subcellularLocation>
        <location evidence="8">Secreted</location>
    </subcellularLocation>
</comment>
<comment type="tissue specificity">
    <text evidence="8">Synthesized by oenocytoids, a type of hemocyte, and released into the hemolymph plasma.</text>
</comment>
<comment type="PTM">
    <text evidence="8">The N-terminus is blocked.</text>
</comment>
<comment type="mass spectrometry" mass="79791.0" method="MALDI" evidence="8"/>
<comment type="similarity">
    <text evidence="2">Belongs to the tyrosinase family.</text>
</comment>
<organism>
    <name type="scientific">Manduca sexta</name>
    <name type="common">Tobacco hawkmoth</name>
    <name type="synonym">Tobacco hornworm</name>
    <dbReference type="NCBI Taxonomy" id="7130"/>
    <lineage>
        <taxon>Eukaryota</taxon>
        <taxon>Metazoa</taxon>
        <taxon>Ecdysozoa</taxon>
        <taxon>Arthropoda</taxon>
        <taxon>Hexapoda</taxon>
        <taxon>Insecta</taxon>
        <taxon>Pterygota</taxon>
        <taxon>Neoptera</taxon>
        <taxon>Endopterygota</taxon>
        <taxon>Lepidoptera</taxon>
        <taxon>Glossata</taxon>
        <taxon>Ditrysia</taxon>
        <taxon>Bombycoidea</taxon>
        <taxon>Sphingidae</taxon>
        <taxon>Sphinginae</taxon>
        <taxon>Sphingini</taxon>
        <taxon>Manduca</taxon>
    </lineage>
</organism>
<gene>
    <name evidence="10" type="primary">ppo</name>
</gene>
<dbReference type="EC" id="1.14.18.1"/>
<dbReference type="EMBL" id="L42556">
    <property type="protein sequence ID" value="AAC37243.1"/>
    <property type="molecule type" value="mRNA"/>
</dbReference>
<dbReference type="PDB" id="3HHS">
    <property type="method" value="X-ray"/>
    <property type="resolution" value="1.97 A"/>
    <property type="chains" value="A=2-695"/>
</dbReference>
<dbReference type="PDBsum" id="3HHS"/>
<dbReference type="SMR" id="Q25519"/>
<dbReference type="DIP" id="DIP-48979N"/>
<dbReference type="IntAct" id="Q25519">
    <property type="interactions" value="1"/>
</dbReference>
<dbReference type="OrthoDB" id="8119704at2759"/>
<dbReference type="GO" id="GO:0005576">
    <property type="term" value="C:extracellular region"/>
    <property type="evidence" value="ECO:0000314"/>
    <property type="project" value="UniProtKB"/>
</dbReference>
<dbReference type="GO" id="GO:0031404">
    <property type="term" value="F:chloride ion binding"/>
    <property type="evidence" value="ECO:0000250"/>
    <property type="project" value="UniProtKB"/>
</dbReference>
<dbReference type="GO" id="GO:0005507">
    <property type="term" value="F:copper ion binding"/>
    <property type="evidence" value="ECO:0000250"/>
    <property type="project" value="UniProtKB"/>
</dbReference>
<dbReference type="GO" id="GO:0004503">
    <property type="term" value="F:tyrosinase activity"/>
    <property type="evidence" value="ECO:0000304"/>
    <property type="project" value="UniProtKB"/>
</dbReference>
<dbReference type="GO" id="GO:0006952">
    <property type="term" value="P:defense response"/>
    <property type="evidence" value="ECO:0000304"/>
    <property type="project" value="UniProtKB"/>
</dbReference>
<dbReference type="GO" id="GO:0006583">
    <property type="term" value="P:melanin biosynthetic process from tyrosine"/>
    <property type="evidence" value="ECO:0000304"/>
    <property type="project" value="UniProtKB"/>
</dbReference>
<dbReference type="GO" id="GO:0035008">
    <property type="term" value="P:positive regulation of melanization defense response"/>
    <property type="evidence" value="ECO:0000303"/>
    <property type="project" value="UniProtKB"/>
</dbReference>
<dbReference type="FunFam" id="1.10.1280.10:FF:000004">
    <property type="entry name" value="Hemocyanin subunit 2"/>
    <property type="match status" value="1"/>
</dbReference>
<dbReference type="FunFam" id="2.60.40.1520:FF:000001">
    <property type="entry name" value="Hemocyanin subunit 2"/>
    <property type="match status" value="1"/>
</dbReference>
<dbReference type="Gene3D" id="1.10.1280.10">
    <property type="entry name" value="Di-copper center containing domain from catechol oxidase"/>
    <property type="match status" value="1"/>
</dbReference>
<dbReference type="Gene3D" id="2.60.40.1520">
    <property type="entry name" value="Hemocyanin, C-terminal domain"/>
    <property type="match status" value="1"/>
</dbReference>
<dbReference type="Gene3D" id="1.20.1370.10">
    <property type="entry name" value="Hemocyanin, N-terminal domain"/>
    <property type="match status" value="1"/>
</dbReference>
<dbReference type="InterPro" id="IPR008922">
    <property type="entry name" value="Di-copper_centre_dom_sf"/>
</dbReference>
<dbReference type="InterPro" id="IPR013788">
    <property type="entry name" value="Hemocyanin/hexamerin"/>
</dbReference>
<dbReference type="InterPro" id="IPR000896">
    <property type="entry name" value="Hemocyanin/hexamerin_mid_dom"/>
</dbReference>
<dbReference type="InterPro" id="IPR005203">
    <property type="entry name" value="Hemocyanin_C"/>
</dbReference>
<dbReference type="InterPro" id="IPR037020">
    <property type="entry name" value="Hemocyanin_C_sf"/>
</dbReference>
<dbReference type="InterPro" id="IPR005204">
    <property type="entry name" value="Hemocyanin_N"/>
</dbReference>
<dbReference type="InterPro" id="IPR036697">
    <property type="entry name" value="Hemocyanin_N_sf"/>
</dbReference>
<dbReference type="InterPro" id="IPR014756">
    <property type="entry name" value="Ig_E-set"/>
</dbReference>
<dbReference type="InterPro" id="IPR002227">
    <property type="entry name" value="Tyrosinase_Cu-bd"/>
</dbReference>
<dbReference type="PANTHER" id="PTHR11511">
    <property type="entry name" value="LARVAL STORAGE PROTEIN/PHENOLOXIDASE"/>
    <property type="match status" value="1"/>
</dbReference>
<dbReference type="PANTHER" id="PTHR11511:SF4">
    <property type="entry name" value="PHENOLOXIDASE 2-RELATED"/>
    <property type="match status" value="1"/>
</dbReference>
<dbReference type="Pfam" id="PF03723">
    <property type="entry name" value="Hemocyanin_C"/>
    <property type="match status" value="1"/>
</dbReference>
<dbReference type="Pfam" id="PF00372">
    <property type="entry name" value="Hemocyanin_M"/>
    <property type="match status" value="1"/>
</dbReference>
<dbReference type="Pfam" id="PF03722">
    <property type="entry name" value="Hemocyanin_N"/>
    <property type="match status" value="1"/>
</dbReference>
<dbReference type="PRINTS" id="PR00187">
    <property type="entry name" value="HAEMOCYANIN"/>
</dbReference>
<dbReference type="SUPFAM" id="SSF48056">
    <property type="entry name" value="Di-copper centre-containing domain"/>
    <property type="match status" value="1"/>
</dbReference>
<dbReference type="SUPFAM" id="SSF81296">
    <property type="entry name" value="E set domains"/>
    <property type="match status" value="1"/>
</dbReference>
<dbReference type="SUPFAM" id="SSF48050">
    <property type="entry name" value="Hemocyanin, N-terminal domain"/>
    <property type="match status" value="1"/>
</dbReference>
<dbReference type="PROSITE" id="PS00209">
    <property type="entry name" value="HEMOCYANIN_1"/>
    <property type="match status" value="1"/>
</dbReference>
<dbReference type="PROSITE" id="PS00210">
    <property type="entry name" value="HEMOCYANIN_2"/>
    <property type="match status" value="1"/>
</dbReference>
<dbReference type="PROSITE" id="PS00498">
    <property type="entry name" value="TYROSINASE_2"/>
    <property type="match status" value="1"/>
</dbReference>
<keyword id="KW-0002">3D-structure</keyword>
<keyword id="KW-0186">Copper</keyword>
<keyword id="KW-0903">Direct protein sequencing</keyword>
<keyword id="KW-1015">Disulfide bond</keyword>
<keyword id="KW-0470">Melanin biosynthesis</keyword>
<keyword id="KW-0479">Metal-binding</keyword>
<keyword id="KW-0503">Monooxygenase</keyword>
<keyword id="KW-0560">Oxidoreductase</keyword>
<keyword id="KW-0964">Secreted</keyword>
<proteinExistence type="evidence at protein level"/>
<sequence length="695" mass="80061">MADIFDSFELLYDRPGEPMINTKGEDKVLFELTEQFLTPEYANNGLELNNRFGDEEEVSRKIILKNLDKIPEFPKAKQLPNDADFSLFLPSHQEMANEVIDVLMSVTENQLQELLSTCVYARINLNPQLFNYCYTVAIMHRRDTGKVRVQNYAEIFPAKFLDSQVFTQAREAAAVIPKTIPRTPIIIPRDYTATDLEEEHRLAYWREDLGINLHHWHWHLVYPFSASDEKIVAKDRRGELFFYMHQQIIARYNCERLCNSLKRVKKFSDWREPIPEAYYPKLDSLTSARGWPPRQAGMRWQDLKRPVDGLNVTIDDMERYRRNIEEAIATGNVILPDKSTKKLDIDMLGNMMEASVLSPNRDLYGSIHNNMHSFSAYMHDPEHRYLESFGVIADEATTMRDPFFYRVHAWVDDIFQSFKEAPHNVRPYSRSQLENPGVQVTSVAVESAGGQQNVLNTFWMQSDVNLSKGLDFSDRGPVYARFTHLNHRPFRYVIKANNTASARRTTVRIFIAPKTDERNLPWALSDQRKMFIEMDRFVVPLSAGENTITRQSTESSLTIPFEQTFRDLSIQGSDPRRSELAAFNYCGCGWPQHMLVPKGTVGGVAYQLFVMLSNYELDKIEQPDGRELSCVEASMFCGLKDKKYPDARPMGYPFDRPSNSATNIEDFSAMSNMGLQDIVIKLSDVTEPNPRNPPA</sequence>
<name>PRP2_MANSE</name>
<reference evidence="9 10" key="1">
    <citation type="journal article" date="1995" name="Proc. Natl. Acad. Sci. U.S.A.">
        <title>Proenzyme of Manduca sexta phenol oxidase: purification, activation, substrate specificity of the active enzyme, and molecular cloning.</title>
        <authorList>
            <person name="Hall M."/>
            <person name="Scott T."/>
            <person name="Sugumaran M."/>
            <person name="Soderhall K."/>
            <person name="Law J.H."/>
        </authorList>
    </citation>
    <scope>NUCLEOTIDE SEQUENCE [MRNA]</scope>
    <scope>PROTEIN SEQUENCE OF 28-51 AND 401-406</scope>
    <source>
        <tissue evidence="6">Hemocyte</tissue>
    </source>
</reference>
<reference evidence="9" key="2">
    <citation type="journal article" date="1996" name="J. Biol. Chem.">
        <title>Characterization of a defense complex consisting of interleukin 1 and phenol oxidase from the hemolymph of the tobacco hornworm, Manduca sexta.</title>
        <authorList>
            <person name="Beck G."/>
            <person name="Cardinale S."/>
            <person name="Wang L."/>
            <person name="Reiner M."/>
            <person name="Sugumaran M."/>
        </authorList>
    </citation>
    <scope>SUBUNIT</scope>
</reference>
<reference evidence="9" key="3">
    <citation type="journal article" date="1997" name="Insect Biochem. Mol. Biol.">
        <title>Subunit composition of pro-phenol oxidase from Manduca sexta: molecular cloning of subunit ProPO-P1.</title>
        <authorList>
            <person name="Jiang H."/>
            <person name="Wang Y."/>
            <person name="Ma C."/>
            <person name="Kanost M.R."/>
        </authorList>
    </citation>
    <scope>BLOCKAGE OF N-TERMINUS</scope>
    <scope>SUBUNIT</scope>
    <scope>SUBCELLULAR LOCATION</scope>
    <scope>TISSUE SPECIFICITY</scope>
    <scope>MASS SPECTROMETRY</scope>
</reference>
<reference evidence="9" key="4">
    <citation type="journal article" date="1999" name="Insect Biochem. Mol. Biol.">
        <title>Immulectin, an inducible C-type lectin from an insect, Manduca sexta, stimulates activation of plasma prophenol oxidase.</title>
        <authorList>
            <person name="Yu X.-Q."/>
            <person name="Gan H."/>
            <person name="Kanost M.R."/>
        </authorList>
    </citation>
    <scope>ACTIVITY REGULATION</scope>
</reference>
<reference evidence="9" key="5">
    <citation type="journal article" date="2005" name="Insect Biochem. Mol. Biol.">
        <title>Prophenoloxidase binds to the surface of hemocytes and is involved in hemocyte melanization in Manduca sexta.</title>
        <authorList>
            <person name="Ling E."/>
            <person name="Yu X.-Q."/>
        </authorList>
    </citation>
    <scope>FUNCTION</scope>
</reference>
<reference key="6">
    <citation type="journal article" date="2009" name="Proc. Natl. Acad. Sci. U.S.A.">
        <title>Crystal structure of Manduca sexta prophenoloxidase provides insights into the mechanism of type 3 copper enzymes.</title>
        <authorList>
            <person name="Li Y."/>
            <person name="Wang Y."/>
            <person name="Jiang H."/>
            <person name="Deng J."/>
        </authorList>
    </citation>
    <scope>X-RAY CRYSTALLOGRAPHY (1.97 ANGSTROMS) IN COMPLEX WITH COPPER IONS</scope>
    <scope>COFACTOR</scope>
    <scope>SUBUNIT</scope>
    <scope>DISULFIDE BOND</scope>
</reference>
<feature type="initiator methionine" description="Removed" evidence="9">
    <location>
        <position position="1"/>
    </location>
</feature>
<feature type="chain" id="PRO_0000234111" description="Phenoloxidase subunit 2">
    <location>
        <begin position="2"/>
        <end position="695"/>
    </location>
</feature>
<feature type="active site" description="Proton acceptor" evidence="1">
    <location>
        <position position="353"/>
    </location>
</feature>
<feature type="binding site" evidence="5">
    <location>
        <position position="215"/>
    </location>
    <ligand>
        <name>Cu cation</name>
        <dbReference type="ChEBI" id="CHEBI:23378"/>
        <label>A</label>
    </ligand>
</feature>
<feature type="binding site" evidence="5">
    <location>
        <position position="219"/>
    </location>
    <ligand>
        <name>Cu cation</name>
        <dbReference type="ChEBI" id="CHEBI:23378"/>
        <label>A</label>
    </ligand>
</feature>
<feature type="binding site" evidence="5">
    <location>
        <position position="245"/>
    </location>
    <ligand>
        <name>Cu cation</name>
        <dbReference type="ChEBI" id="CHEBI:23378"/>
        <label>A</label>
    </ligand>
</feature>
<feature type="binding site" evidence="5">
    <location>
        <position position="368"/>
    </location>
    <ligand>
        <name>Cu cation</name>
        <dbReference type="ChEBI" id="CHEBI:23378"/>
        <label>B</label>
    </ligand>
</feature>
<feature type="binding site" evidence="5">
    <location>
        <position position="372"/>
    </location>
    <ligand>
        <name>Cu cation</name>
        <dbReference type="ChEBI" id="CHEBI:23378"/>
        <label>B</label>
    </ligand>
</feature>
<feature type="binding site" evidence="5">
    <location>
        <position position="408"/>
    </location>
    <ligand>
        <name>Cu cation</name>
        <dbReference type="ChEBI" id="CHEBI:23378"/>
        <label>B</label>
    </ligand>
</feature>
<feature type="disulfide bond" evidence="5">
    <location>
        <begin position="586"/>
        <end position="630"/>
    </location>
</feature>
<feature type="disulfide bond" evidence="5">
    <location>
        <begin position="588"/>
        <end position="637"/>
    </location>
</feature>
<feature type="helix" evidence="11">
    <location>
        <begin position="4"/>
        <end position="10"/>
    </location>
</feature>
<feature type="strand" evidence="11">
    <location>
        <begin position="19"/>
        <end position="21"/>
    </location>
</feature>
<feature type="turn" evidence="11">
    <location>
        <begin position="24"/>
        <end position="27"/>
    </location>
</feature>
<feature type="strand" evidence="11">
    <location>
        <begin position="28"/>
        <end position="31"/>
    </location>
</feature>
<feature type="helix" evidence="11">
    <location>
        <begin position="34"/>
        <end position="36"/>
    </location>
</feature>
<feature type="helix" evidence="11">
    <location>
        <begin position="39"/>
        <end position="41"/>
    </location>
</feature>
<feature type="turn" evidence="11">
    <location>
        <begin position="42"/>
        <end position="44"/>
    </location>
</feature>
<feature type="helix" evidence="11">
    <location>
        <begin position="45"/>
        <end position="53"/>
    </location>
</feature>
<feature type="strand" evidence="11">
    <location>
        <begin position="60"/>
        <end position="63"/>
    </location>
</feature>
<feature type="helix" evidence="11">
    <location>
        <begin position="76"/>
        <end position="78"/>
    </location>
</feature>
<feature type="helix" evidence="11">
    <location>
        <begin position="90"/>
        <end position="105"/>
    </location>
</feature>
<feature type="helix" evidence="11">
    <location>
        <begin position="111"/>
        <end position="124"/>
    </location>
</feature>
<feature type="helix" evidence="11">
    <location>
        <begin position="127"/>
        <end position="140"/>
    </location>
</feature>
<feature type="strand" evidence="11">
    <location>
        <begin position="141"/>
        <end position="143"/>
    </location>
</feature>
<feature type="helix" evidence="11">
    <location>
        <begin position="152"/>
        <end position="155"/>
    </location>
</feature>
<feature type="helix" evidence="11">
    <location>
        <begin position="157"/>
        <end position="159"/>
    </location>
</feature>
<feature type="helix" evidence="11">
    <location>
        <begin position="165"/>
        <end position="175"/>
    </location>
</feature>
<feature type="helix" evidence="11">
    <location>
        <begin position="198"/>
        <end position="202"/>
    </location>
</feature>
<feature type="helix" evidence="11">
    <location>
        <begin position="203"/>
        <end position="206"/>
    </location>
</feature>
<feature type="helix" evidence="11">
    <location>
        <begin position="209"/>
        <end position="221"/>
    </location>
</feature>
<feature type="helix" evidence="11">
    <location>
        <begin position="229"/>
        <end position="232"/>
    </location>
</feature>
<feature type="helix" evidence="11">
    <location>
        <begin position="237"/>
        <end position="257"/>
    </location>
</feature>
<feature type="turn" evidence="11">
    <location>
        <begin position="258"/>
        <end position="260"/>
    </location>
</feature>
<feature type="turn" evidence="11">
    <location>
        <begin position="285"/>
        <end position="287"/>
    </location>
</feature>
<feature type="strand" evidence="11">
    <location>
        <begin position="303"/>
        <end position="305"/>
    </location>
</feature>
<feature type="helix" evidence="11">
    <location>
        <begin position="306"/>
        <end position="308"/>
    </location>
</feature>
<feature type="strand" evidence="11">
    <location>
        <begin position="310"/>
        <end position="312"/>
    </location>
</feature>
<feature type="helix" evidence="11">
    <location>
        <begin position="314"/>
        <end position="330"/>
    </location>
</feature>
<feature type="strand" evidence="11">
    <location>
        <begin position="331"/>
        <end position="334"/>
    </location>
</feature>
<feature type="strand" evidence="11">
    <location>
        <begin position="340"/>
        <end position="342"/>
    </location>
</feature>
<feature type="helix" evidence="11">
    <location>
        <begin position="345"/>
        <end position="353"/>
    </location>
</feature>
<feature type="helix" evidence="11">
    <location>
        <begin position="361"/>
        <end position="364"/>
    </location>
</feature>
<feature type="helix" evidence="11">
    <location>
        <begin position="367"/>
        <end position="376"/>
    </location>
</feature>
<feature type="helix" evidence="11">
    <location>
        <begin position="391"/>
        <end position="393"/>
    </location>
</feature>
<feature type="turn" evidence="11">
    <location>
        <begin position="395"/>
        <end position="397"/>
    </location>
</feature>
<feature type="helix" evidence="11">
    <location>
        <begin position="398"/>
        <end position="400"/>
    </location>
</feature>
<feature type="helix" evidence="11">
    <location>
        <begin position="402"/>
        <end position="419"/>
    </location>
</feature>
<feature type="turn" evidence="11">
    <location>
        <begin position="422"/>
        <end position="424"/>
    </location>
</feature>
<feature type="helix" evidence="11">
    <location>
        <begin position="430"/>
        <end position="433"/>
    </location>
</feature>
<feature type="strand" evidence="11">
    <location>
        <begin position="438"/>
        <end position="447"/>
    </location>
</feature>
<feature type="strand" evidence="11">
    <location>
        <begin position="454"/>
        <end position="465"/>
    </location>
</feature>
<feature type="helix" evidence="11">
    <location>
        <begin position="467"/>
        <end position="469"/>
    </location>
</feature>
<feature type="strand" evidence="11">
    <location>
        <begin position="479"/>
        <end position="487"/>
    </location>
</feature>
<feature type="strand" evidence="11">
    <location>
        <begin position="490"/>
        <end position="498"/>
    </location>
</feature>
<feature type="strand" evidence="11">
    <location>
        <begin position="504"/>
        <end position="515"/>
    </location>
</feature>
<feature type="helix" evidence="11">
    <location>
        <begin position="524"/>
        <end position="527"/>
    </location>
</feature>
<feature type="turn" evidence="11">
    <location>
        <begin position="528"/>
        <end position="530"/>
    </location>
</feature>
<feature type="strand" evidence="11">
    <location>
        <begin position="532"/>
        <end position="540"/>
    </location>
</feature>
<feature type="strand" evidence="11">
    <location>
        <begin position="543"/>
        <end position="551"/>
    </location>
</feature>
<feature type="helix" evidence="11">
    <location>
        <begin position="552"/>
        <end position="554"/>
    </location>
</feature>
<feature type="helix" evidence="11">
    <location>
        <begin position="561"/>
        <end position="564"/>
    </location>
</feature>
<feature type="strand" evidence="11">
    <location>
        <begin position="589"/>
        <end position="591"/>
    </location>
</feature>
<feature type="helix" evidence="11">
    <location>
        <begin position="592"/>
        <end position="594"/>
    </location>
</feature>
<feature type="strand" evidence="11">
    <location>
        <begin position="600"/>
        <end position="602"/>
    </location>
</feature>
<feature type="strand" evidence="11">
    <location>
        <begin position="604"/>
        <end position="614"/>
    </location>
</feature>
<feature type="helix" evidence="11">
    <location>
        <begin position="615"/>
        <end position="618"/>
    </location>
</feature>
<feature type="helix" evidence="11">
    <location>
        <begin position="634"/>
        <end position="637"/>
    </location>
</feature>
<feature type="turn" evidence="11">
    <location>
        <begin position="650"/>
        <end position="653"/>
    </location>
</feature>
<feature type="strand" evidence="11">
    <location>
        <begin position="654"/>
        <end position="656"/>
    </location>
</feature>
<feature type="helix" evidence="11">
    <location>
        <begin position="664"/>
        <end position="667"/>
    </location>
</feature>
<feature type="strand" evidence="11">
    <location>
        <begin position="673"/>
        <end position="688"/>
    </location>
</feature>
<evidence type="ECO:0000250" key="1">
    <source>
        <dbReference type="UniProtKB" id="Q8MZM3"/>
    </source>
</evidence>
<evidence type="ECO:0000255" key="2"/>
<evidence type="ECO:0000269" key="3">
    <source>
    </source>
</evidence>
<evidence type="ECO:0000269" key="4">
    <source>
    </source>
</evidence>
<evidence type="ECO:0000269" key="5">
    <source>
    </source>
</evidence>
<evidence type="ECO:0000269" key="6">
    <source>
    </source>
</evidence>
<evidence type="ECO:0000269" key="7">
    <source>
    </source>
</evidence>
<evidence type="ECO:0000269" key="8">
    <source>
    </source>
</evidence>
<evidence type="ECO:0000305" key="9"/>
<evidence type="ECO:0000312" key="10">
    <source>
        <dbReference type="EMBL" id="AAC37243.1"/>
    </source>
</evidence>
<evidence type="ECO:0007829" key="11">
    <source>
        <dbReference type="PDB" id="3HHS"/>
    </source>
</evidence>
<protein>
    <recommendedName>
        <fullName>Phenoloxidase subunit 2</fullName>
        <ecNumber>1.14.18.1</ecNumber>
    </recommendedName>
    <alternativeName>
        <fullName>proPO-p2</fullName>
    </alternativeName>
</protein>
<accession>Q25519</accession>